<keyword id="KW-0256">Endoplasmic reticulum</keyword>
<keyword id="KW-0328">Glycosyltransferase</keyword>
<keyword id="KW-0472">Membrane</keyword>
<keyword id="KW-1185">Reference proteome</keyword>
<keyword id="KW-0808">Transferase</keyword>
<keyword id="KW-0812">Transmembrane</keyword>
<keyword id="KW-1133">Transmembrane helix</keyword>
<accession>Q09226</accession>
<proteinExistence type="inferred from homology"/>
<reference key="1">
    <citation type="journal article" date="1998" name="Science">
        <title>Genome sequence of the nematode C. elegans: a platform for investigating biology.</title>
        <authorList>
            <consortium name="The C. elegans sequencing consortium"/>
        </authorList>
    </citation>
    <scope>NUCLEOTIDE SEQUENCE [LARGE SCALE GENOMIC DNA]</scope>
    <source>
        <strain>Bristol N2</strain>
    </source>
</reference>
<feature type="chain" id="PRO_0000174157" description="Probable dolichyl pyrophosphate Man9GlcNAc2 alpha-1,3-glucosyltransferase">
    <location>
        <begin position="1"/>
        <end position="503"/>
    </location>
</feature>
<feature type="topological domain" description="Cytoplasmic" evidence="3">
    <location>
        <begin position="1"/>
        <end position="46"/>
    </location>
</feature>
<feature type="transmembrane region" description="Helical" evidence="2">
    <location>
        <begin position="47"/>
        <end position="67"/>
    </location>
</feature>
<feature type="topological domain" description="Lumenal" evidence="3">
    <location>
        <begin position="68"/>
        <end position="151"/>
    </location>
</feature>
<feature type="transmembrane region" description="Helical" evidence="2">
    <location>
        <begin position="152"/>
        <end position="172"/>
    </location>
</feature>
<feature type="topological domain" description="Cytoplasmic" evidence="3">
    <location>
        <begin position="173"/>
        <end position="181"/>
    </location>
</feature>
<feature type="transmembrane region" description="Helical" evidence="2">
    <location>
        <begin position="182"/>
        <end position="202"/>
    </location>
</feature>
<feature type="topological domain" description="Lumenal" evidence="3">
    <location>
        <begin position="203"/>
        <end position="211"/>
    </location>
</feature>
<feature type="transmembrane region" description="Helical" evidence="2">
    <location>
        <begin position="212"/>
        <end position="232"/>
    </location>
</feature>
<feature type="topological domain" description="Cytoplasmic" evidence="3">
    <location>
        <begin position="233"/>
        <end position="239"/>
    </location>
</feature>
<feature type="transmembrane region" description="Helical" evidence="2">
    <location>
        <begin position="240"/>
        <end position="257"/>
    </location>
</feature>
<feature type="topological domain" description="Lumenal" evidence="3">
    <location>
        <begin position="258"/>
        <end position="268"/>
    </location>
</feature>
<feature type="transmembrane region" description="Helical" evidence="2">
    <location>
        <begin position="269"/>
        <end position="289"/>
    </location>
</feature>
<feature type="topological domain" description="Cytoplasmic" evidence="3">
    <location>
        <begin position="290"/>
        <end position="332"/>
    </location>
</feature>
<feature type="transmembrane region" description="Helical" evidence="2">
    <location>
        <begin position="333"/>
        <end position="353"/>
    </location>
</feature>
<feature type="topological domain" description="Lumenal" evidence="3">
    <location>
        <begin position="354"/>
        <end position="359"/>
    </location>
</feature>
<feature type="transmembrane region" description="Helical" evidence="2">
    <location>
        <begin position="360"/>
        <end position="379"/>
    </location>
</feature>
<feature type="topological domain" description="Cytoplasmic" evidence="3">
    <location>
        <begin position="380"/>
        <end position="382"/>
    </location>
</feature>
<feature type="transmembrane region" description="Helical" evidence="2">
    <location>
        <begin position="383"/>
        <end position="403"/>
    </location>
</feature>
<feature type="topological domain" description="Lumenal" evidence="3">
    <location>
        <begin position="404"/>
        <end position="420"/>
    </location>
</feature>
<feature type="transmembrane region" description="Helical" evidence="2">
    <location>
        <begin position="421"/>
        <end position="441"/>
    </location>
</feature>
<feature type="topological domain" description="Cytoplasmic" evidence="3">
    <location>
        <begin position="442"/>
        <end position="443"/>
    </location>
</feature>
<feature type="transmembrane region" description="Helical" evidence="2">
    <location>
        <begin position="444"/>
        <end position="464"/>
    </location>
</feature>
<feature type="topological domain" description="Lumenal" evidence="3">
    <location>
        <begin position="465"/>
        <end position="474"/>
    </location>
</feature>
<feature type="transmembrane region" description="Helical" evidence="2">
    <location>
        <begin position="475"/>
        <end position="495"/>
    </location>
</feature>
<feature type="topological domain" description="Cytoplasmic" evidence="3">
    <location>
        <begin position="496"/>
        <end position="503"/>
    </location>
</feature>
<comment type="function">
    <text evidence="1">Adds the first glucose residue to the lipid-linked oligosaccharide precursor for N-linked glycosylation (By similarity). Transfers glucose from dolichyl phosphate glucose (Dol-P-Glc) onto the lipid-linked oligosaccharide Man(9)GlcNAc(2)-PP-Dol (By similarity).</text>
</comment>
<comment type="catalytic activity">
    <reaction evidence="1">
        <text>an alpha-D-Man-(1-&gt;2)-alpha-D-Man-(1-&gt;2)-alpha-D-Man-(1-&gt;3)-[alpha-D-Man-(1-&gt;2)-alpha-D-Man-(1-&gt;3)-[alpha-D-Man-(1-&gt;2)-alpha-D-Man-(1-&gt;6)]-alpha-D-Man-(1-&gt;6)]-beta-D-Man-(1-&gt;4)-beta-D-GlcNAc-(1-&gt;4)-alpha-D-GlcNAc-diphospho-di-trans,poly-cis-dolichol + a di-trans,poly-cis-dolichyl beta-D-glucosyl phosphate = an alpha-D-Glc-(1-&gt;3)-alpha-D-Man-(1-&gt;2)-alpha-D-Man-(1-&gt;2)-alpha-D-Man-(1-&gt;3)-[alpha-D-Man-(1-&gt;2)-alpha-D-Man-(1-&gt;3)-[alpha-D-Man-(1-&gt;2)-alpha-D-Man-(1-&gt;6)]-alpha-D-Man-(1-&gt;6)]-beta-D-Man-(1-&gt;4)-beta-D-GlcNAc-(1-&gt;4)-alpha-D-GlcNAc-diphospho-di-trans,poly-cis-dolichol + a di-trans,poly-cis-dolichyl phosphate + H(+)</text>
        <dbReference type="Rhea" id="RHEA:30635"/>
        <dbReference type="Rhea" id="RHEA-COMP:19498"/>
        <dbReference type="Rhea" id="RHEA-COMP:19502"/>
        <dbReference type="Rhea" id="RHEA-COMP:19520"/>
        <dbReference type="Rhea" id="RHEA-COMP:19521"/>
        <dbReference type="ChEBI" id="CHEBI:15378"/>
        <dbReference type="ChEBI" id="CHEBI:57525"/>
        <dbReference type="ChEBI" id="CHEBI:57683"/>
        <dbReference type="ChEBI" id="CHEBI:132520"/>
        <dbReference type="ChEBI" id="CHEBI:132521"/>
        <dbReference type="EC" id="2.4.1.267"/>
    </reaction>
</comment>
<comment type="pathway">
    <text evidence="1">Protein modification; protein glycosylation.</text>
</comment>
<comment type="subcellular location">
    <subcellularLocation>
        <location evidence="3">Endoplasmic reticulum membrane</location>
        <topology evidence="3">Multi-pass membrane protein</topology>
    </subcellularLocation>
</comment>
<comment type="similarity">
    <text evidence="3">Belongs to the ALG6/ALG8 glucosyltransferase family.</text>
</comment>
<protein>
    <recommendedName>
        <fullName>Probable dolichyl pyrophosphate Man9GlcNAc2 alpha-1,3-glucosyltransferase</fullName>
        <ecNumber evidence="1">2.4.1.267</ecNumber>
    </recommendedName>
    <alternativeName>
        <fullName>Asparagine-linked glycosylation protein 6 homolog</fullName>
    </alternativeName>
    <alternativeName>
        <fullName>Dol-P-Glc:Man(9)GlcNAc(2)-PP-Dol alpha-1,3-glucosyltransferase</fullName>
    </alternativeName>
    <alternativeName>
        <fullName>Dolichyl-P-Glc:Man9GlcNAc2-PP-dolichyl glucosyltransferase</fullName>
    </alternativeName>
</protein>
<sequence length="503" mass="57907">MKERIKDKAWRPQFIKLNNPDTSKKIVSQKSKKPEIVDLSSPGNNDLVTISILCVLLCFQLAISLNPHSGESQPPMYGDYEAQRHWMEITVNLPIEQWYLNGTHNDLLYWGLDYPPITAYHHYLLGVISNKINKKWVELTTSRGYESIAHKLFMRLSAIIPFYIFYLPPLIFYFTRSKKMSPILYALALLYPSLLVIDNGHFQYNSISLGLFLATYMFLTKNFTIIGSILFVAALNYKQMELYHALPVFVFILARSINKTQLFNSFRRILTIGLFVVGTFLIIWLPFLLTGTAKDVIIRVFPFNRGLYEDKVASFWCAFSFILKRLPLQSVQIYISTALVLAGSAPSLLVLFLRPTEKQFRISLTATGLSFFLFSFHVHEKTILLAAVPALLLISEYTSLVIWFLNITNISIFSLCVKDNFALSLSFFFAYFVVSYAYTAPRKISHILTILIGFAICILELYGPSNQRFPHIYQLANAFFSCVHFIYFLLYLSFASFEKTKKE</sequence>
<dbReference type="EC" id="2.4.1.267" evidence="1"/>
<dbReference type="EMBL" id="BX284602">
    <property type="protein sequence ID" value="CAA86666.1"/>
    <property type="molecule type" value="Genomic_DNA"/>
</dbReference>
<dbReference type="PIR" id="T19071">
    <property type="entry name" value="T19071"/>
</dbReference>
<dbReference type="RefSeq" id="NP_495685.1">
    <property type="nucleotide sequence ID" value="NM_063284.4"/>
</dbReference>
<dbReference type="SMR" id="Q09226"/>
<dbReference type="FunCoup" id="Q09226">
    <property type="interactions" value="3161"/>
</dbReference>
<dbReference type="STRING" id="6239.C08B11.8.1"/>
<dbReference type="CAZy" id="GT57">
    <property type="family name" value="Glycosyltransferase Family 57"/>
</dbReference>
<dbReference type="PaxDb" id="6239-C08B11.8"/>
<dbReference type="EnsemblMetazoa" id="C08B11.8.1">
    <property type="protein sequence ID" value="C08B11.8.1"/>
    <property type="gene ID" value="WBGene00007435"/>
</dbReference>
<dbReference type="EnsemblMetazoa" id="C08B11.8.2">
    <property type="protein sequence ID" value="C08B11.8.2"/>
    <property type="gene ID" value="WBGene00007435"/>
</dbReference>
<dbReference type="GeneID" id="182392"/>
<dbReference type="KEGG" id="cel:CELE_C08B11.8"/>
<dbReference type="UCSC" id="C08B11.8">
    <property type="organism name" value="c. elegans"/>
</dbReference>
<dbReference type="AGR" id="WB:WBGene00007435"/>
<dbReference type="CTD" id="182392"/>
<dbReference type="WormBase" id="C08B11.8">
    <property type="protein sequence ID" value="CE01478"/>
    <property type="gene ID" value="WBGene00007435"/>
    <property type="gene designation" value="algn-6"/>
</dbReference>
<dbReference type="eggNOG" id="KOG2575">
    <property type="taxonomic scope" value="Eukaryota"/>
</dbReference>
<dbReference type="GeneTree" id="ENSGT00940000153733"/>
<dbReference type="HOGENOM" id="CLU_008110_3_0_1"/>
<dbReference type="InParanoid" id="Q09226"/>
<dbReference type="OMA" id="FQVPPMH"/>
<dbReference type="OrthoDB" id="4983at2759"/>
<dbReference type="PhylomeDB" id="Q09226"/>
<dbReference type="Reactome" id="R-CEL-446193">
    <property type="pathway name" value="Biosynthesis of the N-glycan precursor (dolichol lipid-linked oligosaccharide, LLO) and transfer to a nascent protein"/>
</dbReference>
<dbReference type="UniPathway" id="UPA00378"/>
<dbReference type="PRO" id="PR:Q09226"/>
<dbReference type="Proteomes" id="UP000001940">
    <property type="component" value="Chromosome II"/>
</dbReference>
<dbReference type="Bgee" id="WBGene00007435">
    <property type="expression patterns" value="Expressed in germ line (C elegans) and 4 other cell types or tissues"/>
</dbReference>
<dbReference type="GO" id="GO:0005789">
    <property type="term" value="C:endoplasmic reticulum membrane"/>
    <property type="evidence" value="ECO:0000318"/>
    <property type="project" value="GO_Central"/>
</dbReference>
<dbReference type="GO" id="GO:0042281">
    <property type="term" value="F:dolichyl pyrophosphate Man9GlcNAc2 alpha-1,3-glucosyltransferase activity"/>
    <property type="evidence" value="ECO:0000318"/>
    <property type="project" value="GO_Central"/>
</dbReference>
<dbReference type="GO" id="GO:0006488">
    <property type="term" value="P:dolichol-linked oligosaccharide biosynthetic process"/>
    <property type="evidence" value="ECO:0000318"/>
    <property type="project" value="GO_Central"/>
</dbReference>
<dbReference type="InterPro" id="IPR004856">
    <property type="entry name" value="Glyco_trans_ALG6/ALG8"/>
</dbReference>
<dbReference type="PANTHER" id="PTHR12413">
    <property type="entry name" value="DOLICHYL GLYCOSYLTRANSFERASE"/>
    <property type="match status" value="1"/>
</dbReference>
<dbReference type="PANTHER" id="PTHR12413:SF1">
    <property type="entry name" value="DOLICHYL PYROPHOSPHATE MAN9GLCNAC2 ALPHA-1,3-GLUCOSYLTRANSFERASE"/>
    <property type="match status" value="1"/>
</dbReference>
<dbReference type="Pfam" id="PF03155">
    <property type="entry name" value="Alg6_Alg8"/>
    <property type="match status" value="1"/>
</dbReference>
<evidence type="ECO:0000250" key="1">
    <source>
        <dbReference type="UniProtKB" id="Q12001"/>
    </source>
</evidence>
<evidence type="ECO:0000255" key="2"/>
<evidence type="ECO:0000305" key="3"/>
<evidence type="ECO:0000312" key="4">
    <source>
        <dbReference type="WormBase" id="C08B11.8"/>
    </source>
</evidence>
<gene>
    <name evidence="4" type="primary">algn-6</name>
    <name evidence="4" type="ORF">C08B11.8</name>
</gene>
<organism>
    <name type="scientific">Caenorhabditis elegans</name>
    <dbReference type="NCBI Taxonomy" id="6239"/>
    <lineage>
        <taxon>Eukaryota</taxon>
        <taxon>Metazoa</taxon>
        <taxon>Ecdysozoa</taxon>
        <taxon>Nematoda</taxon>
        <taxon>Chromadorea</taxon>
        <taxon>Rhabditida</taxon>
        <taxon>Rhabditina</taxon>
        <taxon>Rhabditomorpha</taxon>
        <taxon>Rhabditoidea</taxon>
        <taxon>Rhabditidae</taxon>
        <taxon>Peloderinae</taxon>
        <taxon>Caenorhabditis</taxon>
    </lineage>
</organism>
<name>ALG6_CAEEL</name>